<gene>
    <name evidence="3" type="ordered locus">At1g66420</name>
    <name evidence="4" type="ORF">F28G11.12</name>
    <name evidence="5" type="ORF">T27F4.16</name>
</gene>
<name>STKLE_ARATH</name>
<feature type="chain" id="PRO_0000436979" description="Probable transcription factor At1g66420">
    <location>
        <begin position="1"/>
        <end position="282"/>
    </location>
</feature>
<feature type="region of interest" description="Disordered" evidence="1">
    <location>
        <begin position="33"/>
        <end position="73"/>
    </location>
</feature>
<reference key="1">
    <citation type="journal article" date="2000" name="Nature">
        <title>Sequence and analysis of chromosome 1 of the plant Arabidopsis thaliana.</title>
        <authorList>
            <person name="Theologis A."/>
            <person name="Ecker J.R."/>
            <person name="Palm C.J."/>
            <person name="Federspiel N.A."/>
            <person name="Kaul S."/>
            <person name="White O."/>
            <person name="Alonso J."/>
            <person name="Altafi H."/>
            <person name="Araujo R."/>
            <person name="Bowman C.L."/>
            <person name="Brooks S.Y."/>
            <person name="Buehler E."/>
            <person name="Chan A."/>
            <person name="Chao Q."/>
            <person name="Chen H."/>
            <person name="Cheuk R.F."/>
            <person name="Chin C.W."/>
            <person name="Chung M.K."/>
            <person name="Conn L."/>
            <person name="Conway A.B."/>
            <person name="Conway A.R."/>
            <person name="Creasy T.H."/>
            <person name="Dewar K."/>
            <person name="Dunn P."/>
            <person name="Etgu P."/>
            <person name="Feldblyum T.V."/>
            <person name="Feng J.-D."/>
            <person name="Fong B."/>
            <person name="Fujii C.Y."/>
            <person name="Gill J.E."/>
            <person name="Goldsmith A.D."/>
            <person name="Haas B."/>
            <person name="Hansen N.F."/>
            <person name="Hughes B."/>
            <person name="Huizar L."/>
            <person name="Hunter J.L."/>
            <person name="Jenkins J."/>
            <person name="Johnson-Hopson C."/>
            <person name="Khan S."/>
            <person name="Khaykin E."/>
            <person name="Kim C.J."/>
            <person name="Koo H.L."/>
            <person name="Kremenetskaia I."/>
            <person name="Kurtz D.B."/>
            <person name="Kwan A."/>
            <person name="Lam B."/>
            <person name="Langin-Hooper S."/>
            <person name="Lee A."/>
            <person name="Lee J.M."/>
            <person name="Lenz C.A."/>
            <person name="Li J.H."/>
            <person name="Li Y.-P."/>
            <person name="Lin X."/>
            <person name="Liu S.X."/>
            <person name="Liu Z.A."/>
            <person name="Luros J.S."/>
            <person name="Maiti R."/>
            <person name="Marziali A."/>
            <person name="Militscher J."/>
            <person name="Miranda M."/>
            <person name="Nguyen M."/>
            <person name="Nierman W.C."/>
            <person name="Osborne B.I."/>
            <person name="Pai G."/>
            <person name="Peterson J."/>
            <person name="Pham P.K."/>
            <person name="Rizzo M."/>
            <person name="Rooney T."/>
            <person name="Rowley D."/>
            <person name="Sakano H."/>
            <person name="Salzberg S.L."/>
            <person name="Schwartz J.R."/>
            <person name="Shinn P."/>
            <person name="Southwick A.M."/>
            <person name="Sun H."/>
            <person name="Tallon L.J."/>
            <person name="Tambunga G."/>
            <person name="Toriumi M.J."/>
            <person name="Town C.D."/>
            <person name="Utterback T."/>
            <person name="Van Aken S."/>
            <person name="Vaysberg M."/>
            <person name="Vysotskaia V.S."/>
            <person name="Walker M."/>
            <person name="Wu D."/>
            <person name="Yu G."/>
            <person name="Fraser C.M."/>
            <person name="Venter J.C."/>
            <person name="Davis R.W."/>
        </authorList>
    </citation>
    <scope>NUCLEOTIDE SEQUENCE [LARGE SCALE GENOMIC DNA]</scope>
    <source>
        <strain>cv. Columbia</strain>
    </source>
</reference>
<reference key="2">
    <citation type="journal article" date="2017" name="Plant J.">
        <title>Araport11: a complete reannotation of the Arabidopsis thaliana reference genome.</title>
        <authorList>
            <person name="Cheng C.Y."/>
            <person name="Krishnakumar V."/>
            <person name="Chan A.P."/>
            <person name="Thibaud-Nissen F."/>
            <person name="Schobel S."/>
            <person name="Town C.D."/>
        </authorList>
    </citation>
    <scope>GENOME REANNOTATION</scope>
    <source>
        <strain>cv. Columbia</strain>
    </source>
</reference>
<reference key="3">
    <citation type="submission" date="2009-03" db="EMBL/GenBank/DDBJ databases">
        <title>ORF cloning and analysis of Arabidopsis transcription factor genes.</title>
        <authorList>
            <person name="Fujita M."/>
            <person name="Mizukado S."/>
            <person name="Seki M."/>
            <person name="Shinozaki K."/>
            <person name="Mitsuda N."/>
            <person name="Takiguchi Y."/>
            <person name="Takagi M."/>
        </authorList>
    </citation>
    <scope>NUCLEOTIDE SEQUENCE [LARGE SCALE GENOMIC DNA]</scope>
</reference>
<reference key="4">
    <citation type="journal article" date="2003" name="Plant J.">
        <title>GeBP, the first member of a new gene family in Arabidopsis, encodes a nuclear protein with DNA-binding activity and is regulated by KNAT1.</title>
        <authorList>
            <person name="Curaba J."/>
            <person name="Herzog M."/>
            <person name="Vachon G."/>
        </authorList>
    </citation>
    <scope>GENE FAMILY</scope>
</reference>
<reference key="5">
    <citation type="journal article" date="2016" name="Plant Physiol. Biochem.">
        <title>Regulation of Arabidopsis thaliana plasma membrane glucose-responsive regulator (AtPGR) expression by A. thaliana storekeeper-like transcription factor, AtSTKL, modulates glucose response in Arabidopsis.</title>
        <authorList>
            <person name="Chung M.S."/>
            <person name="Lee S."/>
            <person name="Min J.H."/>
            <person name="Huang P."/>
            <person name="Ju H.W."/>
            <person name="Kim C.S."/>
        </authorList>
    </citation>
    <scope>GENE FAMILY</scope>
</reference>
<protein>
    <recommendedName>
        <fullName evidence="2">Probable transcription factor At1g66420</fullName>
    </recommendedName>
    <alternativeName>
        <fullName evidence="2">Storekeeper-like protein At1g66420</fullName>
    </alternativeName>
</protein>
<proteinExistence type="evidence at protein level"/>
<dbReference type="EMBL" id="AC020665">
    <property type="protein sequence ID" value="AAG52170.1"/>
    <property type="molecule type" value="Genomic_DNA"/>
</dbReference>
<dbReference type="EMBL" id="AC074025">
    <property type="protein sequence ID" value="AAG51162.1"/>
    <property type="molecule type" value="Genomic_DNA"/>
</dbReference>
<dbReference type="EMBL" id="CP002684">
    <property type="protein sequence ID" value="AEE34507.1"/>
    <property type="molecule type" value="Genomic_DNA"/>
</dbReference>
<dbReference type="EMBL" id="AB493520">
    <property type="protein sequence ID" value="BAH30358.1"/>
    <property type="molecule type" value="Genomic_DNA"/>
</dbReference>
<dbReference type="PIR" id="F96689">
    <property type="entry name" value="F96689"/>
</dbReference>
<dbReference type="RefSeq" id="NP_176815.1">
    <property type="nucleotide sequence ID" value="NM_105313.1"/>
</dbReference>
<dbReference type="SMR" id="Q9C517"/>
<dbReference type="IntAct" id="Q9C517">
    <property type="interactions" value="5"/>
</dbReference>
<dbReference type="STRING" id="3702.Q9C517"/>
<dbReference type="PaxDb" id="3702-AT1G66420.1"/>
<dbReference type="DNASU" id="842960"/>
<dbReference type="EnsemblPlants" id="AT1G66420.1">
    <property type="protein sequence ID" value="AT1G66420.1"/>
    <property type="gene ID" value="AT1G66420"/>
</dbReference>
<dbReference type="GeneID" id="842960"/>
<dbReference type="Gramene" id="AT1G66420.1">
    <property type="protein sequence ID" value="AT1G66420.1"/>
    <property type="gene ID" value="AT1G66420"/>
</dbReference>
<dbReference type="KEGG" id="ath:AT1G66420"/>
<dbReference type="Araport" id="AT1G66420"/>
<dbReference type="TAIR" id="AT1G66420"/>
<dbReference type="HOGENOM" id="CLU_051273_0_0_1"/>
<dbReference type="InParanoid" id="Q9C517"/>
<dbReference type="OMA" id="KVQPSEM"/>
<dbReference type="PhylomeDB" id="Q9C517"/>
<dbReference type="PRO" id="PR:Q9C517"/>
<dbReference type="Proteomes" id="UP000006548">
    <property type="component" value="Chromosome 1"/>
</dbReference>
<dbReference type="ExpressionAtlas" id="Q9C517">
    <property type="expression patterns" value="baseline and differential"/>
</dbReference>
<dbReference type="GO" id="GO:0006355">
    <property type="term" value="P:regulation of DNA-templated transcription"/>
    <property type="evidence" value="ECO:0000304"/>
    <property type="project" value="TAIR"/>
</dbReference>
<dbReference type="InterPro" id="IPR007592">
    <property type="entry name" value="GEBP"/>
</dbReference>
<dbReference type="InterPro" id="IPR053933">
    <property type="entry name" value="GeBP-like_C"/>
</dbReference>
<dbReference type="InterPro" id="IPR053932">
    <property type="entry name" value="GeBP-like_DBD"/>
</dbReference>
<dbReference type="PANTHER" id="PTHR31662">
    <property type="entry name" value="BNAANNG10740D PROTEIN-RELATED"/>
    <property type="match status" value="1"/>
</dbReference>
<dbReference type="PANTHER" id="PTHR31662:SF68">
    <property type="entry name" value="DNA-BINDING STOREKEEPER PROTEIN TRANSCRIPTIONAL REGULATOR-LIKE PROTEIN-RELATED"/>
    <property type="match status" value="1"/>
</dbReference>
<dbReference type="Pfam" id="PF22757">
    <property type="entry name" value="GeBP-like_C"/>
    <property type="match status" value="1"/>
</dbReference>
<dbReference type="Pfam" id="PF04504">
    <property type="entry name" value="GeBP-like_DBD"/>
    <property type="match status" value="1"/>
</dbReference>
<accession>Q9C517</accession>
<organism>
    <name type="scientific">Arabidopsis thaliana</name>
    <name type="common">Mouse-ear cress</name>
    <dbReference type="NCBI Taxonomy" id="3702"/>
    <lineage>
        <taxon>Eukaryota</taxon>
        <taxon>Viridiplantae</taxon>
        <taxon>Streptophyta</taxon>
        <taxon>Embryophyta</taxon>
        <taxon>Tracheophyta</taxon>
        <taxon>Spermatophyta</taxon>
        <taxon>Magnoliopsida</taxon>
        <taxon>eudicotyledons</taxon>
        <taxon>Gunneridae</taxon>
        <taxon>Pentapetalae</taxon>
        <taxon>rosids</taxon>
        <taxon>malvids</taxon>
        <taxon>Brassicales</taxon>
        <taxon>Brassicaceae</taxon>
        <taxon>Camelineae</taxon>
        <taxon>Arabidopsis</taxon>
    </lineage>
</organism>
<sequence>MSKKHLKPLETCFEDEEDDVIYLPPGLVTGATSKKNEEFCGGSGKVQPSEMKRRSEGTSTDMTSKRAKKVSAEDEKKVGEWTKNPYFQRLWSEEDEIVMLQGIIKFEDVTGKSPFEDRHGFIEFVKNSISFEASVQQYIGKISQLKRKYTRKRKNGFSEGHEQKCFKLAMSIWGTKETSKKTDLCSSPKGKKVKEEDGDVTNSDWFENSFLLPSIESLGVDSVKRKWNVVPMEFKKKIEERLELLEADESECKKMEEMLKVKNSECVKQKTNLLNEVIDVMT</sequence>
<comment type="interaction">
    <interactant intactId="EBI-15194681">
        <id>Q9C517</id>
    </interactant>
    <interactant intactId="EBI-15192745">
        <id>Q9LST3</id>
        <label>At5g60142</label>
    </interactant>
    <organismsDiffer>false</organismsDiffer>
    <experiments>3</experiments>
</comment>
<comment type="similarity">
    <text evidence="2">Belongs to the GeBP family.</text>
</comment>
<comment type="online information" name="Plant Transcription Factor Database">
    <link uri="https://planttfdb.gao-lab.org/family.php?fam=GeBP#family_intro"/>
</comment>
<keyword id="KW-1185">Reference proteome</keyword>
<keyword id="KW-0804">Transcription</keyword>
<keyword id="KW-0805">Transcription regulation</keyword>
<evidence type="ECO:0000256" key="1">
    <source>
        <dbReference type="SAM" id="MobiDB-lite"/>
    </source>
</evidence>
<evidence type="ECO:0000305" key="2"/>
<evidence type="ECO:0000312" key="3">
    <source>
        <dbReference type="Araport" id="AT1G66420"/>
    </source>
</evidence>
<evidence type="ECO:0000312" key="4">
    <source>
        <dbReference type="EMBL" id="AAG51162.1"/>
    </source>
</evidence>
<evidence type="ECO:0000312" key="5">
    <source>
        <dbReference type="EMBL" id="AAG52170.1"/>
    </source>
</evidence>